<reference key="1">
    <citation type="journal article" date="2002" name="Eur. J. Neurosci.">
        <title>A peripheral nervous system actin-binding protein regulates neurite outgrowth.</title>
        <authorList>
            <person name="Ravenall S.J."/>
            <person name="Gavazzi I."/>
            <person name="Wood J.N."/>
            <person name="Akopian A.N."/>
        </authorList>
    </citation>
    <scope>NUCLEOTIDE SEQUENCE [MRNA]</scope>
    <scope>FUNCTION</scope>
    <scope>ASSOCIATION WITH ACTIN</scope>
    <scope>SUBCELLULAR LOCATION</scope>
    <scope>TISSUE SPECIFICITY</scope>
    <source>
        <tissue>Peripheral nerve</tissue>
    </source>
</reference>
<reference key="2">
    <citation type="journal article" date="2004" name="Nature">
        <title>Genome sequence of the Brown Norway rat yields insights into mammalian evolution.</title>
        <authorList>
            <person name="Gibbs R.A."/>
            <person name="Weinstock G.M."/>
            <person name="Metzker M.L."/>
            <person name="Muzny D.M."/>
            <person name="Sodergren E.J."/>
            <person name="Scherer S."/>
            <person name="Scott G."/>
            <person name="Steffen D."/>
            <person name="Worley K.C."/>
            <person name="Burch P.E."/>
            <person name="Okwuonu G."/>
            <person name="Hines S."/>
            <person name="Lewis L."/>
            <person name="Deramo C."/>
            <person name="Delgado O."/>
            <person name="Dugan-Rocha S."/>
            <person name="Miner G."/>
            <person name="Morgan M."/>
            <person name="Hawes A."/>
            <person name="Gill R."/>
            <person name="Holt R.A."/>
            <person name="Adams M.D."/>
            <person name="Amanatides P.G."/>
            <person name="Baden-Tillson H."/>
            <person name="Barnstead M."/>
            <person name="Chin S."/>
            <person name="Evans C.A."/>
            <person name="Ferriera S."/>
            <person name="Fosler C."/>
            <person name="Glodek A."/>
            <person name="Gu Z."/>
            <person name="Jennings D."/>
            <person name="Kraft C.L."/>
            <person name="Nguyen T."/>
            <person name="Pfannkoch C.M."/>
            <person name="Sitter C."/>
            <person name="Sutton G.G."/>
            <person name="Venter J.C."/>
            <person name="Woodage T."/>
            <person name="Smith D."/>
            <person name="Lee H.-M."/>
            <person name="Gustafson E."/>
            <person name="Cahill P."/>
            <person name="Kana A."/>
            <person name="Doucette-Stamm L."/>
            <person name="Weinstock K."/>
            <person name="Fechtel K."/>
            <person name="Weiss R.B."/>
            <person name="Dunn D.M."/>
            <person name="Green E.D."/>
            <person name="Blakesley R.W."/>
            <person name="Bouffard G.G."/>
            <person name="De Jong P.J."/>
            <person name="Osoegawa K."/>
            <person name="Zhu B."/>
            <person name="Marra M."/>
            <person name="Schein J."/>
            <person name="Bosdet I."/>
            <person name="Fjell C."/>
            <person name="Jones S."/>
            <person name="Krzywinski M."/>
            <person name="Mathewson C."/>
            <person name="Siddiqui A."/>
            <person name="Wye N."/>
            <person name="McPherson J."/>
            <person name="Zhao S."/>
            <person name="Fraser C.M."/>
            <person name="Shetty J."/>
            <person name="Shatsman S."/>
            <person name="Geer K."/>
            <person name="Chen Y."/>
            <person name="Abramzon S."/>
            <person name="Nierman W.C."/>
            <person name="Havlak P.H."/>
            <person name="Chen R."/>
            <person name="Durbin K.J."/>
            <person name="Egan A."/>
            <person name="Ren Y."/>
            <person name="Song X.-Z."/>
            <person name="Li B."/>
            <person name="Liu Y."/>
            <person name="Qin X."/>
            <person name="Cawley S."/>
            <person name="Cooney A.J."/>
            <person name="D'Souza L.M."/>
            <person name="Martin K."/>
            <person name="Wu J.Q."/>
            <person name="Gonzalez-Garay M.L."/>
            <person name="Jackson A.R."/>
            <person name="Kalafus K.J."/>
            <person name="McLeod M.P."/>
            <person name="Milosavljevic A."/>
            <person name="Virk D."/>
            <person name="Volkov A."/>
            <person name="Wheeler D.A."/>
            <person name="Zhang Z."/>
            <person name="Bailey J.A."/>
            <person name="Eichler E.E."/>
            <person name="Tuzun E."/>
            <person name="Birney E."/>
            <person name="Mongin E."/>
            <person name="Ureta-Vidal A."/>
            <person name="Woodwark C."/>
            <person name="Zdobnov E."/>
            <person name="Bork P."/>
            <person name="Suyama M."/>
            <person name="Torrents D."/>
            <person name="Alexandersson M."/>
            <person name="Trask B.J."/>
            <person name="Young J.M."/>
            <person name="Huang H."/>
            <person name="Wang H."/>
            <person name="Xing H."/>
            <person name="Daniels S."/>
            <person name="Gietzen D."/>
            <person name="Schmidt J."/>
            <person name="Stevens K."/>
            <person name="Vitt U."/>
            <person name="Wingrove J."/>
            <person name="Camara F."/>
            <person name="Mar Alba M."/>
            <person name="Abril J.F."/>
            <person name="Guigo R."/>
            <person name="Smit A."/>
            <person name="Dubchak I."/>
            <person name="Rubin E.M."/>
            <person name="Couronne O."/>
            <person name="Poliakov A."/>
            <person name="Huebner N."/>
            <person name="Ganten D."/>
            <person name="Goesele C."/>
            <person name="Hummel O."/>
            <person name="Kreitler T."/>
            <person name="Lee Y.-A."/>
            <person name="Monti J."/>
            <person name="Schulz H."/>
            <person name="Zimdahl H."/>
            <person name="Himmelbauer H."/>
            <person name="Lehrach H."/>
            <person name="Jacob H.J."/>
            <person name="Bromberg S."/>
            <person name="Gullings-Handley J."/>
            <person name="Jensen-Seaman M.I."/>
            <person name="Kwitek A.E."/>
            <person name="Lazar J."/>
            <person name="Pasko D."/>
            <person name="Tonellato P.J."/>
            <person name="Twigger S."/>
            <person name="Ponting C.P."/>
            <person name="Duarte J.M."/>
            <person name="Rice S."/>
            <person name="Goodstadt L."/>
            <person name="Beatson S.A."/>
            <person name="Emes R.D."/>
            <person name="Winter E.E."/>
            <person name="Webber C."/>
            <person name="Brandt P."/>
            <person name="Nyakatura G."/>
            <person name="Adetobi M."/>
            <person name="Chiaromonte F."/>
            <person name="Elnitski L."/>
            <person name="Eswara P."/>
            <person name="Hardison R.C."/>
            <person name="Hou M."/>
            <person name="Kolbe D."/>
            <person name="Makova K."/>
            <person name="Miller W."/>
            <person name="Nekrutenko A."/>
            <person name="Riemer C."/>
            <person name="Schwartz S."/>
            <person name="Taylor J."/>
            <person name="Yang S."/>
            <person name="Zhang Y."/>
            <person name="Lindpaintner K."/>
            <person name="Andrews T.D."/>
            <person name="Caccamo M."/>
            <person name="Clamp M."/>
            <person name="Clarke L."/>
            <person name="Curwen V."/>
            <person name="Durbin R.M."/>
            <person name="Eyras E."/>
            <person name="Searle S.M."/>
            <person name="Cooper G.M."/>
            <person name="Batzoglou S."/>
            <person name="Brudno M."/>
            <person name="Sidow A."/>
            <person name="Stone E.A."/>
            <person name="Payseur B.A."/>
            <person name="Bourque G."/>
            <person name="Lopez-Otin C."/>
            <person name="Puente X.S."/>
            <person name="Chakrabarti K."/>
            <person name="Chatterji S."/>
            <person name="Dewey C."/>
            <person name="Pachter L."/>
            <person name="Bray N."/>
            <person name="Yap V.B."/>
            <person name="Caspi A."/>
            <person name="Tesler G."/>
            <person name="Pevzner P.A."/>
            <person name="Haussler D."/>
            <person name="Roskin K.M."/>
            <person name="Baertsch R."/>
            <person name="Clawson H."/>
            <person name="Furey T.S."/>
            <person name="Hinrichs A.S."/>
            <person name="Karolchik D."/>
            <person name="Kent W.J."/>
            <person name="Rosenbloom K.R."/>
            <person name="Trumbower H."/>
            <person name="Weirauch M."/>
            <person name="Cooper D.N."/>
            <person name="Stenson P.D."/>
            <person name="Ma B."/>
            <person name="Brent M."/>
            <person name="Arumugam M."/>
            <person name="Shteynberg D."/>
            <person name="Copley R.R."/>
            <person name="Taylor M.S."/>
            <person name="Riethman H."/>
            <person name="Mudunuri U."/>
            <person name="Peterson J."/>
            <person name="Guyer M."/>
            <person name="Felsenfeld A."/>
            <person name="Old S."/>
            <person name="Mockrin S."/>
            <person name="Collins F.S."/>
        </authorList>
    </citation>
    <scope>NUCLEOTIDE SEQUENCE [LARGE SCALE GENOMIC DNA]</scope>
    <source>
        <strain>Brown Norway</strain>
    </source>
</reference>
<reference key="3">
    <citation type="journal article" date="2017" name="J. Clin. Invest.">
        <title>Advillin acts upstream of phospholipase C 1 in steroid-resistant nephrotic syndrome.</title>
        <authorList>
            <person name="Rao J."/>
            <person name="Ashraf S."/>
            <person name="Tan W."/>
            <person name="van der Ven A.T."/>
            <person name="Gee H.Y."/>
            <person name="Braun D.A."/>
            <person name="Feher K."/>
            <person name="George S.P."/>
            <person name="Esmaeilniakooshkghazi A."/>
            <person name="Choi W.I."/>
            <person name="Jobst-Schwan T."/>
            <person name="Schneider R."/>
            <person name="Schmidt J.M."/>
            <person name="Widmeier E."/>
            <person name="Warejko J.K."/>
            <person name="Hermle T."/>
            <person name="Schapiro D."/>
            <person name="Lovric S."/>
            <person name="Shril S."/>
            <person name="Daga A."/>
            <person name="Nayir A."/>
            <person name="Shenoy M."/>
            <person name="Tse Y."/>
            <person name="Bald M."/>
            <person name="Helmchen U."/>
            <person name="Mir S."/>
            <person name="Berdeli A."/>
            <person name="Kari J.A."/>
            <person name="El Desoky S."/>
            <person name="Soliman N.A."/>
            <person name="Bagga A."/>
            <person name="Mane S."/>
            <person name="Jairajpuri M.A."/>
            <person name="Lifton R.P."/>
            <person name="Khurana S."/>
            <person name="Martins J.C."/>
            <person name="Hildebrandt F."/>
        </authorList>
    </citation>
    <scope>TISSUE SPECIFICITY</scope>
</reference>
<gene>
    <name evidence="10" type="primary">Avil</name>
    <name type="synonym">Advil</name>
    <name evidence="8" type="synonym">Pervin</name>
</gene>
<accession>Q9WU06</accession>
<accession>M0RCA6</accession>
<organism>
    <name type="scientific">Rattus norvegicus</name>
    <name type="common">Rat</name>
    <dbReference type="NCBI Taxonomy" id="10116"/>
    <lineage>
        <taxon>Eukaryota</taxon>
        <taxon>Metazoa</taxon>
        <taxon>Chordata</taxon>
        <taxon>Craniata</taxon>
        <taxon>Vertebrata</taxon>
        <taxon>Euteleostomi</taxon>
        <taxon>Mammalia</taxon>
        <taxon>Eutheria</taxon>
        <taxon>Euarchontoglires</taxon>
        <taxon>Glires</taxon>
        <taxon>Rodentia</taxon>
        <taxon>Myomorpha</taxon>
        <taxon>Muroidea</taxon>
        <taxon>Muridae</taxon>
        <taxon>Murinae</taxon>
        <taxon>Rattus</taxon>
    </lineage>
</organism>
<dbReference type="EMBL" id="AF099929">
    <property type="protein sequence ID" value="AAD22523.1"/>
    <property type="molecule type" value="mRNA"/>
</dbReference>
<dbReference type="EMBL" id="AABR07057421">
    <property type="status" value="NOT_ANNOTATED_CDS"/>
    <property type="molecule type" value="Genomic_DNA"/>
</dbReference>
<dbReference type="EMBL" id="CH473950">
    <property type="protein sequence ID" value="EDM16510.1"/>
    <property type="molecule type" value="Genomic_DNA"/>
</dbReference>
<dbReference type="RefSeq" id="NP_077377.2">
    <property type="nucleotide sequence ID" value="NM_024401.3"/>
</dbReference>
<dbReference type="SMR" id="Q9WU06"/>
<dbReference type="FunCoup" id="Q9WU06">
    <property type="interactions" value="69"/>
</dbReference>
<dbReference type="STRING" id="10116.ENSRNOP00000067218"/>
<dbReference type="iPTMnet" id="Q9WU06"/>
<dbReference type="PhosphoSitePlus" id="Q9WU06"/>
<dbReference type="PaxDb" id="10116-ENSRNOP00000067218"/>
<dbReference type="Ensembl" id="ENSRNOT00000073237.2">
    <property type="protein sequence ID" value="ENSRNOP00000067218.1"/>
    <property type="gene ID" value="ENSRNOG00000050419.2"/>
</dbReference>
<dbReference type="GeneID" id="79253"/>
<dbReference type="KEGG" id="rno:79253"/>
<dbReference type="AGR" id="RGD:620301"/>
<dbReference type="CTD" id="10677"/>
<dbReference type="RGD" id="620301">
    <property type="gene designation" value="Avil"/>
</dbReference>
<dbReference type="eggNOG" id="KOG0443">
    <property type="taxonomic scope" value="Eukaryota"/>
</dbReference>
<dbReference type="GeneTree" id="ENSGT00940000159587"/>
<dbReference type="HOGENOM" id="CLU_002568_3_1_1"/>
<dbReference type="InParanoid" id="Q9WU06"/>
<dbReference type="OMA" id="DPNIWSA"/>
<dbReference type="OrthoDB" id="6375767at2759"/>
<dbReference type="PhylomeDB" id="Q9WU06"/>
<dbReference type="PRO" id="PR:Q9WU06"/>
<dbReference type="Proteomes" id="UP000002494">
    <property type="component" value="Chromosome 7"/>
</dbReference>
<dbReference type="Proteomes" id="UP000234681">
    <property type="component" value="Chromosome 7"/>
</dbReference>
<dbReference type="Bgee" id="ENSRNOG00000050419">
    <property type="expression patterns" value="Expressed in duodenum and 19 other cell types or tissues"/>
</dbReference>
<dbReference type="GO" id="GO:0015629">
    <property type="term" value="C:actin cytoskeleton"/>
    <property type="evidence" value="ECO:0000318"/>
    <property type="project" value="GO_Central"/>
</dbReference>
<dbReference type="GO" id="GO:0005884">
    <property type="term" value="C:actin filament"/>
    <property type="evidence" value="ECO:0000250"/>
    <property type="project" value="UniProtKB"/>
</dbReference>
<dbReference type="GO" id="GO:0030424">
    <property type="term" value="C:axon"/>
    <property type="evidence" value="ECO:0007669"/>
    <property type="project" value="UniProtKB-SubCell"/>
</dbReference>
<dbReference type="GO" id="GO:0042995">
    <property type="term" value="C:cell projection"/>
    <property type="evidence" value="ECO:0000314"/>
    <property type="project" value="UniProtKB"/>
</dbReference>
<dbReference type="GO" id="GO:0005737">
    <property type="term" value="C:cytoplasm"/>
    <property type="evidence" value="ECO:0000318"/>
    <property type="project" value="GO_Central"/>
</dbReference>
<dbReference type="GO" id="GO:0005925">
    <property type="term" value="C:focal adhesion"/>
    <property type="evidence" value="ECO:0000250"/>
    <property type="project" value="UniProtKB"/>
</dbReference>
<dbReference type="GO" id="GO:0030027">
    <property type="term" value="C:lamellipodium"/>
    <property type="evidence" value="ECO:0000250"/>
    <property type="project" value="UniProtKB"/>
</dbReference>
<dbReference type="GO" id="GO:0043005">
    <property type="term" value="C:neuron projection"/>
    <property type="evidence" value="ECO:0000314"/>
    <property type="project" value="UniProtKB"/>
</dbReference>
<dbReference type="GO" id="GO:0003779">
    <property type="term" value="F:actin binding"/>
    <property type="evidence" value="ECO:0000314"/>
    <property type="project" value="UniProtKB"/>
</dbReference>
<dbReference type="GO" id="GO:0051015">
    <property type="term" value="F:actin filament binding"/>
    <property type="evidence" value="ECO:0000250"/>
    <property type="project" value="UniProtKB"/>
</dbReference>
<dbReference type="GO" id="GO:0071933">
    <property type="term" value="F:Arp2/3 complex binding"/>
    <property type="evidence" value="ECO:0000250"/>
    <property type="project" value="UniProtKB"/>
</dbReference>
<dbReference type="GO" id="GO:0005546">
    <property type="term" value="F:phosphatidylinositol-4,5-bisphosphate binding"/>
    <property type="evidence" value="ECO:0000318"/>
    <property type="project" value="GO_Central"/>
</dbReference>
<dbReference type="GO" id="GO:0007015">
    <property type="term" value="P:actin filament organization"/>
    <property type="evidence" value="ECO:0000250"/>
    <property type="project" value="UniProtKB"/>
</dbReference>
<dbReference type="GO" id="GO:0051014">
    <property type="term" value="P:actin filament severing"/>
    <property type="evidence" value="ECO:0000318"/>
    <property type="project" value="GO_Central"/>
</dbReference>
<dbReference type="GO" id="GO:0008154">
    <property type="term" value="P:actin polymerization or depolymerization"/>
    <property type="evidence" value="ECO:0000318"/>
    <property type="project" value="GO_Central"/>
</dbReference>
<dbReference type="GO" id="GO:0051016">
    <property type="term" value="P:barbed-end actin filament capping"/>
    <property type="evidence" value="ECO:0000318"/>
    <property type="project" value="GO_Central"/>
</dbReference>
<dbReference type="GO" id="GO:0060271">
    <property type="term" value="P:cilium assembly"/>
    <property type="evidence" value="ECO:0000250"/>
    <property type="project" value="UniProtKB"/>
</dbReference>
<dbReference type="GO" id="GO:0007399">
    <property type="term" value="P:nervous system development"/>
    <property type="evidence" value="ECO:0000314"/>
    <property type="project" value="RGD"/>
</dbReference>
<dbReference type="GO" id="GO:0010592">
    <property type="term" value="P:positive regulation of lamellipodium assembly"/>
    <property type="evidence" value="ECO:0000250"/>
    <property type="project" value="UniProtKB"/>
</dbReference>
<dbReference type="GO" id="GO:0010976">
    <property type="term" value="P:positive regulation of neuron projection development"/>
    <property type="evidence" value="ECO:0000314"/>
    <property type="project" value="UniProtKB"/>
</dbReference>
<dbReference type="GO" id="GO:1900480">
    <property type="term" value="P:regulation of diacylglycerol biosynthetic process"/>
    <property type="evidence" value="ECO:0000250"/>
    <property type="project" value="UniProtKB"/>
</dbReference>
<dbReference type="CDD" id="cd11290">
    <property type="entry name" value="gelsolin_S1_like"/>
    <property type="match status" value="1"/>
</dbReference>
<dbReference type="CDD" id="cd11289">
    <property type="entry name" value="gelsolin_S2_like"/>
    <property type="match status" value="1"/>
</dbReference>
<dbReference type="CDD" id="cd11292">
    <property type="entry name" value="gelsolin_S3_like"/>
    <property type="match status" value="1"/>
</dbReference>
<dbReference type="CDD" id="cd11293">
    <property type="entry name" value="gelsolin_S4_like"/>
    <property type="match status" value="1"/>
</dbReference>
<dbReference type="CDD" id="cd11288">
    <property type="entry name" value="gelsolin_S5_like"/>
    <property type="match status" value="1"/>
</dbReference>
<dbReference type="CDD" id="cd11291">
    <property type="entry name" value="gelsolin_S6_like"/>
    <property type="match status" value="1"/>
</dbReference>
<dbReference type="FunFam" id="3.40.20.10:FF:000001">
    <property type="entry name" value="Gelsolin"/>
    <property type="match status" value="1"/>
</dbReference>
<dbReference type="FunFam" id="3.40.20.10:FF:000002">
    <property type="entry name" value="Gelsolin"/>
    <property type="match status" value="1"/>
</dbReference>
<dbReference type="FunFam" id="3.40.20.10:FF:000004">
    <property type="entry name" value="Gelsolin"/>
    <property type="match status" value="1"/>
</dbReference>
<dbReference type="FunFam" id="3.40.20.10:FF:000005">
    <property type="entry name" value="Gelsolin"/>
    <property type="match status" value="1"/>
</dbReference>
<dbReference type="FunFam" id="3.40.20.10:FF:000027">
    <property type="entry name" value="Villin 1"/>
    <property type="match status" value="1"/>
</dbReference>
<dbReference type="FunFam" id="1.10.950.10:FF:000005">
    <property type="entry name" value="Villin-1"/>
    <property type="match status" value="1"/>
</dbReference>
<dbReference type="FunFam" id="3.40.20.10:FF:000035">
    <property type="entry name" value="Villin-1"/>
    <property type="match status" value="1"/>
</dbReference>
<dbReference type="Gene3D" id="3.40.20.10">
    <property type="entry name" value="Severin"/>
    <property type="match status" value="6"/>
</dbReference>
<dbReference type="Gene3D" id="1.10.950.10">
    <property type="entry name" value="Villin headpiece domain"/>
    <property type="match status" value="1"/>
</dbReference>
<dbReference type="InterPro" id="IPR029006">
    <property type="entry name" value="ADF-H/Gelsolin-like_dom_sf"/>
</dbReference>
<dbReference type="InterPro" id="IPR007123">
    <property type="entry name" value="Gelsolin-like_dom"/>
</dbReference>
<dbReference type="InterPro" id="IPR036180">
    <property type="entry name" value="Gelsolin-like_dom_sf"/>
</dbReference>
<dbReference type="InterPro" id="IPR007122">
    <property type="entry name" value="Villin/Gelsolin"/>
</dbReference>
<dbReference type="InterPro" id="IPR003128">
    <property type="entry name" value="Villin_headpiece"/>
</dbReference>
<dbReference type="InterPro" id="IPR036886">
    <property type="entry name" value="Villin_headpiece_dom_sf"/>
</dbReference>
<dbReference type="PANTHER" id="PTHR11977:SF33">
    <property type="entry name" value="ADVILLIN"/>
    <property type="match status" value="1"/>
</dbReference>
<dbReference type="PANTHER" id="PTHR11977">
    <property type="entry name" value="VILLIN"/>
    <property type="match status" value="1"/>
</dbReference>
<dbReference type="Pfam" id="PF00626">
    <property type="entry name" value="Gelsolin"/>
    <property type="match status" value="6"/>
</dbReference>
<dbReference type="Pfam" id="PF02209">
    <property type="entry name" value="VHP"/>
    <property type="match status" value="1"/>
</dbReference>
<dbReference type="PRINTS" id="PR00597">
    <property type="entry name" value="GELSOLIN"/>
</dbReference>
<dbReference type="SMART" id="SM00262">
    <property type="entry name" value="GEL"/>
    <property type="match status" value="6"/>
</dbReference>
<dbReference type="SMART" id="SM00153">
    <property type="entry name" value="VHP"/>
    <property type="match status" value="1"/>
</dbReference>
<dbReference type="SUPFAM" id="SSF55753">
    <property type="entry name" value="Actin depolymerizing proteins"/>
    <property type="match status" value="4"/>
</dbReference>
<dbReference type="SUPFAM" id="SSF82754">
    <property type="entry name" value="C-terminal, gelsolin-like domain of Sec23/24"/>
    <property type="match status" value="2"/>
</dbReference>
<dbReference type="SUPFAM" id="SSF47050">
    <property type="entry name" value="VHP, Villin headpiece domain"/>
    <property type="match status" value="1"/>
</dbReference>
<dbReference type="PROSITE" id="PS51089">
    <property type="entry name" value="HP"/>
    <property type="match status" value="1"/>
</dbReference>
<sequence length="819" mass="91894">MSLSSAFRTVTNDPGIITWRIEKMELVLVPLSAHGNFYEGDCYIILSTRRVGSLLSQNIHFWIGKDSSQDEQSCAAIYTTQLDDYLGGSPVQHREVQYHESDTFRGYFKRGIIYKKGGVASGMKHVETNTYDVKRLLHVKGKRNIRATEVEMSWDSFNQGDVFLLDLGMVIIQWNGPESNSGERLKAMLLAKDIRDRERGGRAEIGVIEGDKEAASPELMTVLQNTLGRRSIIKPAVPDEVTDQQQKSTIMLYHVSDTTGQLSVTEVATRPLVQELLNHDDCYILDQSGTKIYVWKGKGATKVEKQAAMSKALDFIKMKGYPSSTNVETVNDGAESAMFKQLFQKWSVKDQTTGLGKTFSIGKIAKIFQDKFDVTLLHTKPEVAAQERMVDDGNGKVEVWRIENLELVPVEYQWHGFFYGGDCYLVLYTYDVNGKPCYILYIWQGRHASQDELAASAYQAVEVDQQFGGAPVQVRVSMGKEPRHFMAIFKGKLVIYEGGTSRKGNVEPDPPVRLFQIHGNDKSNTKAVEVSASASSLNSNDVFLLWTQAEHYLWYGKGSSGDERAMAKELAELLCDGDADTVAEGQEPPEFWDLLGGKAPYANDKRLQQETLDIQVRLFECSNKTGRFLVTEVTDFTQDDLSPGDVMLLDTWDQVFLWIGAEANATEKEGALSTAQEYLVTHPSGRDPDTPILIIKQGFEPPTFTGWFLAWDPHIWSEGKSYEQLKNELGDATAIVRITTDMKNATLSLNSSESGPKYYPVEVLLKSQDQELPEDVDPTKKENYLSERDFVSVFGITRGQFVSLPGWKQLQLKKEAGLF</sequence>
<comment type="function">
    <text evidence="2 6">Ca(2+)-regulated actin-binding protein which plays an important role in actin bundling. May have a unique function in the morphogenesis of neuronal cells which form ganglia. Required for SREC1-mediated regulation of neurite-like outgrowth. Plays a role in regenerative sensory axon outgrowth and remodeling processes after peripheral injury in neonates (PubMed:11849295). Involved in the formation of long fine actin-containing filopodia-like structures in fibroblast. Plays a role in ciliogenesis. In podocytes, controls lamellipodia formation through the regulation of EGF-induced diacylglycerol generation by PLCE1 and ARP2/3 complex assembly (By similarity).</text>
</comment>
<comment type="subunit">
    <text evidence="2 3 6">Associates (via C-terminus) with actin (PubMed:11849295). Interacts with F-actin (By similarity). Interacts with SCARF1; the interaction occurs in embryonic dorsal root ganglions at 18 dpc and induces neurite-like outgrowth (By similarity). Interacts with PLCE1. Interacts with ACTR2 and ACTR3; associates with the ARP2/3 complex (By similarity).</text>
</comment>
<comment type="subcellular location">
    <subcellularLocation>
        <location evidence="6">Cytoplasm</location>
        <location evidence="6">Cytoskeleton</location>
    </subcellularLocation>
    <subcellularLocation>
        <location evidence="6">Cell projection</location>
        <location evidence="6">Neuron projection</location>
    </subcellularLocation>
    <subcellularLocation>
        <location evidence="6">Cell projection</location>
        <location evidence="6">Axon</location>
    </subcellularLocation>
    <subcellularLocation>
        <location evidence="2">Cell projection</location>
        <location evidence="2">Lamellipodium</location>
    </subcellularLocation>
    <subcellularLocation>
        <location evidence="2">Cell junction</location>
        <location evidence="2">Focal adhesion</location>
    </subcellularLocation>
    <text evidence="2">In podocytes, present in the F-actin-enriched cell periphery that generates lamellipodia and focal adhesions.</text>
</comment>
<comment type="tissue specificity">
    <text evidence="6 7">Expressed in dorsal root ganglion (DRG) neurons and superior cervical ganglia (SCG) (PubMed:11849295). Expressed in podocytes (PubMed:29058690).</text>
</comment>
<comment type="domain">
    <text>The C-terminal domain is necessary for the induction of long fine actin-containing filopodia-like structures in fibroblast and neurite-like outgrowth.</text>
</comment>
<comment type="similarity">
    <text evidence="9">Belongs to the villin/gelsolin family.</text>
</comment>
<protein>
    <recommendedName>
        <fullName evidence="9">Advillin</fullName>
    </recommendedName>
    <alternativeName>
        <fullName>Peripheral nervous system villin-like protein</fullName>
        <shortName evidence="8">Pervin</shortName>
    </alternativeName>
</protein>
<feature type="chain" id="PRO_0000407313" description="Advillin">
    <location>
        <begin position="1"/>
        <end position="819"/>
    </location>
</feature>
<feature type="repeat" description="Gelsolin-like 1" evidence="4">
    <location>
        <begin position="24"/>
        <end position="105"/>
    </location>
</feature>
<feature type="repeat" description="Gelsolin-like 2" evidence="4">
    <location>
        <begin position="144"/>
        <end position="215"/>
    </location>
</feature>
<feature type="repeat" description="Gelsolin-like 3" evidence="4">
    <location>
        <begin position="265"/>
        <end position="339"/>
    </location>
</feature>
<feature type="repeat" description="Gelsolin-like 4" evidence="4">
    <location>
        <begin position="407"/>
        <end position="486"/>
    </location>
</feature>
<feature type="repeat" description="Gelsolin-like 5" evidence="4">
    <location>
        <begin position="524"/>
        <end position="592"/>
    </location>
</feature>
<feature type="repeat" description="Gelsolin-like 6" evidence="4">
    <location>
        <begin position="631"/>
        <end position="704"/>
    </location>
</feature>
<feature type="domain" description="HP" evidence="5">
    <location>
        <begin position="753"/>
        <end position="819"/>
    </location>
</feature>
<feature type="region of interest" description="Core" evidence="1">
    <location>
        <begin position="1"/>
        <end position="731"/>
    </location>
</feature>
<feature type="region of interest" description="Required for interaction with F-actin" evidence="2">
    <location>
        <begin position="628"/>
        <end position="819"/>
    </location>
</feature>
<feature type="region of interest" description="Headpiece" evidence="1">
    <location>
        <begin position="731"/>
        <end position="819"/>
    </location>
</feature>
<feature type="binding site" evidence="1">
    <location>
        <begin position="109"/>
        <end position="116"/>
    </location>
    <ligand>
        <name>a 1,2-diacyl-sn-glycero-3-phospho-(1D-myo-inositol-4,5-bisphosphate)</name>
        <dbReference type="ChEBI" id="CHEBI:58456"/>
    </ligand>
</feature>
<feature type="binding site" evidence="1">
    <location>
        <begin position="135"/>
        <end position="143"/>
    </location>
    <ligand>
        <name>a 1,2-diacyl-sn-glycero-3-phospho-(1D-myo-inositol-4,5-bisphosphate)</name>
        <dbReference type="ChEBI" id="CHEBI:58456"/>
    </ligand>
</feature>
<feature type="modified residue" description="Phosphotyrosine" evidence="3">
    <location>
        <position position="85"/>
    </location>
</feature>
<feature type="modified residue" description="Phosphotyrosine" evidence="3">
    <location>
        <position position="758"/>
    </location>
</feature>
<feature type="sequence conflict" description="In Ref. 1; AAD22523." evidence="9" ref="1">
    <original>NT</original>
    <variation>FS</variation>
    <location>
        <begin position="129"/>
        <end position="130"/>
    </location>
</feature>
<feature type="sequence conflict" description="In Ref. 1; AAD22523." evidence="9" ref="1">
    <original>R</original>
    <variation>G</variation>
    <location>
        <position position="199"/>
    </location>
</feature>
<feature type="sequence conflict" description="In Ref. 1; AAD22523." evidence="9" ref="1">
    <original>D</original>
    <variation>S</variation>
    <location>
        <position position="239"/>
    </location>
</feature>
<feature type="sequence conflict" description="In Ref. 1; AAD22523." evidence="9" ref="1">
    <original>G</original>
    <variation>R</variation>
    <location>
        <position position="498"/>
    </location>
</feature>
<feature type="sequence conflict" description="In Ref. 1; AAD22523." evidence="9" ref="1">
    <original>G</original>
    <variation>P</variation>
    <location>
        <position position="556"/>
    </location>
</feature>
<keyword id="KW-0117">Actin capping</keyword>
<keyword id="KW-0009">Actin-binding</keyword>
<keyword id="KW-0106">Calcium</keyword>
<keyword id="KW-0965">Cell junction</keyword>
<keyword id="KW-0966">Cell projection</keyword>
<keyword id="KW-0963">Cytoplasm</keyword>
<keyword id="KW-0206">Cytoskeleton</keyword>
<keyword id="KW-0597">Phosphoprotein</keyword>
<keyword id="KW-1185">Reference proteome</keyword>
<keyword id="KW-0677">Repeat</keyword>
<proteinExistence type="evidence at transcript level"/>
<evidence type="ECO:0000250" key="1"/>
<evidence type="ECO:0000250" key="2">
    <source>
        <dbReference type="UniProtKB" id="O75366"/>
    </source>
</evidence>
<evidence type="ECO:0000250" key="3">
    <source>
        <dbReference type="UniProtKB" id="O88398"/>
    </source>
</evidence>
<evidence type="ECO:0000255" key="4"/>
<evidence type="ECO:0000255" key="5">
    <source>
        <dbReference type="PROSITE-ProRule" id="PRU00595"/>
    </source>
</evidence>
<evidence type="ECO:0000269" key="6">
    <source>
    </source>
</evidence>
<evidence type="ECO:0000269" key="7">
    <source>
    </source>
</evidence>
<evidence type="ECO:0000303" key="8">
    <source>
    </source>
</evidence>
<evidence type="ECO:0000305" key="9"/>
<evidence type="ECO:0000312" key="10">
    <source>
        <dbReference type="RGD" id="620301"/>
    </source>
</evidence>
<name>AVIL_RAT</name>